<dbReference type="EMBL" id="AF245221">
    <property type="protein sequence ID" value="AAF77182.1"/>
    <property type="molecule type" value="mRNA"/>
</dbReference>
<dbReference type="EMBL" id="AJ297392">
    <property type="protein sequence ID" value="CAC05629.1"/>
    <property type="molecule type" value="mRNA"/>
</dbReference>
<dbReference type="EMBL" id="BC056070">
    <property type="protein sequence ID" value="AAH56070.1"/>
    <property type="molecule type" value="mRNA"/>
</dbReference>
<dbReference type="RefSeq" id="NP_001079870.1">
    <property type="nucleotide sequence ID" value="NM_001086401.1"/>
</dbReference>
<dbReference type="SMR" id="Q9I8M9"/>
<dbReference type="GlyCosmos" id="Q9I8M9">
    <property type="glycosylation" value="3 sites, No reported glycans"/>
</dbReference>
<dbReference type="DNASU" id="379560"/>
<dbReference type="GeneID" id="379560"/>
<dbReference type="KEGG" id="xla:379560"/>
<dbReference type="AGR" id="Xenbase:XB-GENE-483449"/>
<dbReference type="CTD" id="379560"/>
<dbReference type="Xenbase" id="XB-GENE-483449">
    <property type="gene designation" value="twsg1.L"/>
</dbReference>
<dbReference type="OMA" id="NCTVAFF"/>
<dbReference type="OrthoDB" id="10037323at2759"/>
<dbReference type="Proteomes" id="UP000186698">
    <property type="component" value="Chromosome 6L"/>
</dbReference>
<dbReference type="Bgee" id="379560">
    <property type="expression patterns" value="Expressed in blastula and 19 other cell types or tissues"/>
</dbReference>
<dbReference type="GO" id="GO:0005615">
    <property type="term" value="C:extracellular space"/>
    <property type="evidence" value="ECO:0000318"/>
    <property type="project" value="GO_Central"/>
</dbReference>
<dbReference type="GO" id="GO:0030510">
    <property type="term" value="P:regulation of BMP signaling pathway"/>
    <property type="evidence" value="ECO:0000318"/>
    <property type="project" value="GO_Central"/>
</dbReference>
<dbReference type="InterPro" id="IPR006761">
    <property type="entry name" value="Tsg"/>
</dbReference>
<dbReference type="PANTHER" id="PTHR12312:SF17">
    <property type="entry name" value="TWISTED GASTRULATION PROTEIN HOMOLOG 1"/>
    <property type="match status" value="1"/>
</dbReference>
<dbReference type="PANTHER" id="PTHR12312">
    <property type="entry name" value="TWISTED GASTRULATION PROTEIN HOMOLOG 1-A-RELATED"/>
    <property type="match status" value="1"/>
</dbReference>
<dbReference type="Pfam" id="PF04668">
    <property type="entry name" value="Tsg"/>
    <property type="match status" value="1"/>
</dbReference>
<dbReference type="Pfam" id="PF23782">
    <property type="entry name" value="Tsg_N"/>
    <property type="match status" value="1"/>
</dbReference>
<gene>
    <name type="primary">twsg1-b</name>
    <name type="synonym">tsg</name>
</gene>
<organism>
    <name type="scientific">Xenopus laevis</name>
    <name type="common">African clawed frog</name>
    <dbReference type="NCBI Taxonomy" id="8355"/>
    <lineage>
        <taxon>Eukaryota</taxon>
        <taxon>Metazoa</taxon>
        <taxon>Chordata</taxon>
        <taxon>Craniata</taxon>
        <taxon>Vertebrata</taxon>
        <taxon>Euteleostomi</taxon>
        <taxon>Amphibia</taxon>
        <taxon>Batrachia</taxon>
        <taxon>Anura</taxon>
        <taxon>Pipoidea</taxon>
        <taxon>Pipidae</taxon>
        <taxon>Xenopodinae</taxon>
        <taxon>Xenopus</taxon>
        <taxon>Xenopus</taxon>
    </lineage>
</organism>
<accession>Q9I8M9</accession>
<sequence length="218" mass="24403">MKPSFLHIPAAALLLCSLWILPIHCCNKALCASDVSKCLIQELCQCRPTDGNCSCCKECMLCLGTLWDECCDCVGMCNPRNYSDTPPTSKSTVEELHEPIPSLFRALTEGDTQLNWNIVTFPVVEELSHHENLVSFLETVNQPQQQNVSVQVSHSNEKEHMCTVVYFDDCMSIHQCKVSCESMGASKYRWFHNACCECVGPECIDYGSKTVKCVNCMV</sequence>
<comment type="function">
    <text evidence="3 4">Involved in dorsal-ventral patterning, permitting peak BMP signaling by antagonizing the residual anti-BMP activity of the cleavage products of chrd. Functions to promote the formation of ventral mesoderm by increasing the activity of bmp7 and other BMPS. Seems to antagonize BMP signaling by forming ternary complexes with chrd and BMPs, thereby preventing BMPs from binding to their receptors. In addition to the anti-BMP function, also has pro-BMP activity, partly mediated by cleavage and degradation of chrd, which releases BMPs from ternary complexes. May be an important modulator of BMP-regulated cartilage development and chondrocyte differentiation.</text>
</comment>
<comment type="subunit">
    <text evidence="1">Binds directly to bmp2, bmp4 and bmp7 and can form a ternary complex with bmps and chordin, thus preventing the binding of bmps to their cell surface receptors.</text>
</comment>
<comment type="subcellular location">
    <subcellularLocation>
        <location evidence="3">Secreted</location>
    </subcellularLocation>
</comment>
<comment type="developmental stage">
    <text evidence="3">Maternal transcripts are distributed throughout animal half of the embryo during cleavage stages. At the late gastrula stage, maternal transcripts decrease and zygotic transcripts appear specifically in the ventral region of the embryo. After neurulation, expressed ventrally in the closed blastopore slit and the neural tube. At the tailbud stage, detected in the postanal region, heart and dorsal eye.</text>
</comment>
<comment type="domain">
    <text>The N-terminal domain is sufficient to interact with bmp4.</text>
</comment>
<comment type="miscellaneous">
    <text>Knockdown of tsg and bmp7 results in the siren phenotype with loss of posteroventral cell fates associated with decreased BMP activity.</text>
</comment>
<comment type="similarity">
    <text evidence="5">Belongs to the twisted gastrulation protein family.</text>
</comment>
<protein>
    <recommendedName>
        <fullName>Twisted gastrulation protein homolog 1-B</fullName>
    </recommendedName>
</protein>
<reference key="1">
    <citation type="journal article" date="2000" name="Nature">
        <title>The evolutionarily conserved BMP-binding protein Twisted gastrulation promotes BMP signalling.</title>
        <authorList>
            <person name="Oelgeschlager M."/>
            <person name="Larrain J."/>
            <person name="Geissert D."/>
            <person name="De Robertis E.M."/>
        </authorList>
    </citation>
    <scope>NUCLEOTIDE SEQUENCE [MRNA]</scope>
    <scope>FUNCTION</scope>
    <scope>SUBCELLULAR LOCATION</scope>
    <scope>DEVELOPMENTAL STAGE</scope>
    <scope>INTERACTION WITH CHRD AND BMP4</scope>
</reference>
<reference key="2">
    <citation type="journal article" date="2001" name="Mamm. Genome">
        <title>Evolutionary conservation, developmental expression, and genomic mapping of mammalian Twisted gastrulation.</title>
        <authorList>
            <person name="Graf D."/>
            <person name="Timmons P.M."/>
            <person name="Hitchins M."/>
            <person name="Episkopou V."/>
            <person name="Moore G."/>
            <person name="Ito T."/>
            <person name="Fujiyama A."/>
            <person name="Fisher A.G."/>
            <person name="Merkenschlager M."/>
        </authorList>
    </citation>
    <scope>NUCLEOTIDE SEQUENCE [MRNA]</scope>
</reference>
<reference key="3">
    <citation type="submission" date="2003-08" db="EMBL/GenBank/DDBJ databases">
        <authorList>
            <consortium name="NIH - Xenopus Gene Collection (XGC) project"/>
        </authorList>
    </citation>
    <scope>NUCLEOTIDE SEQUENCE [LARGE SCALE MRNA]</scope>
    <source>
        <tissue>Spleen</tissue>
    </source>
</reference>
<reference key="4">
    <citation type="journal article" date="2005" name="Development">
        <title>Sirenomelia in Bmp7 and Tsg compound mutant mice: requirement for Bmp signaling in the development of ventral posterior mesoderm.</title>
        <authorList>
            <person name="Zakin L."/>
            <person name="Reversade B."/>
            <person name="Kuroda H."/>
            <person name="Lyons K.M."/>
            <person name="De Robertis E.M."/>
        </authorList>
    </citation>
    <scope>KNOCKDOWN</scope>
    <scope>FUNCTION</scope>
    <scope>INTERACTION WITH BMP7</scope>
</reference>
<evidence type="ECO:0000250" key="1"/>
<evidence type="ECO:0000255" key="2"/>
<evidence type="ECO:0000269" key="3">
    <source>
    </source>
</evidence>
<evidence type="ECO:0000269" key="4">
    <source>
    </source>
</evidence>
<evidence type="ECO:0000305" key="5"/>
<proteinExistence type="evidence at protein level"/>
<name>TWS1B_XENLA</name>
<keyword id="KW-0217">Developmental protein</keyword>
<keyword id="KW-0325">Glycoprotein</keyword>
<keyword id="KW-1185">Reference proteome</keyword>
<keyword id="KW-0964">Secreted</keyword>
<keyword id="KW-0732">Signal</keyword>
<feature type="signal peptide" evidence="2">
    <location>
        <begin position="1"/>
        <end position="25"/>
    </location>
</feature>
<feature type="chain" id="PRO_0000278814" description="Twisted gastrulation protein homolog 1-B">
    <location>
        <begin position="26"/>
        <end position="218"/>
    </location>
</feature>
<feature type="glycosylation site" description="N-linked (GlcNAc...) asparagine" evidence="2">
    <location>
        <position position="52"/>
    </location>
</feature>
<feature type="glycosylation site" description="N-linked (GlcNAc...) asparagine" evidence="2">
    <location>
        <position position="81"/>
    </location>
</feature>
<feature type="glycosylation site" description="N-linked (GlcNAc...) asparagine" evidence="2">
    <location>
        <position position="147"/>
    </location>
</feature>